<organismHost>
    <name type="scientific">Mus musculus</name>
    <name type="common">Mouse</name>
    <dbReference type="NCBI Taxonomy" id="10090"/>
</organismHost>
<proteinExistence type="inferred from homology"/>
<organism>
    <name type="scientific">Murid herpesvirus 1 (strain Smith)</name>
    <name type="common">MuHV-1</name>
    <name type="synonym">Mouse cytomegalovirus</name>
    <dbReference type="NCBI Taxonomy" id="10367"/>
    <lineage>
        <taxon>Viruses</taxon>
        <taxon>Duplodnaviria</taxon>
        <taxon>Heunggongvirae</taxon>
        <taxon>Peploviricota</taxon>
        <taxon>Herviviricetes</taxon>
        <taxon>Herpesvirales</taxon>
        <taxon>Orthoherpesviridae</taxon>
        <taxon>Betaherpesvirinae</taxon>
        <taxon>Muromegalovirus</taxon>
        <taxon>Muromegalovirus muridbeta1</taxon>
        <taxon>Murid herpesvirus 1</taxon>
    </lineage>
</organism>
<dbReference type="EMBL" id="L07319">
    <property type="protein sequence ID" value="AAA96662.1"/>
    <property type="status" value="ALT_FRAME"/>
    <property type="molecule type" value="Genomic_DNA"/>
</dbReference>
<dbReference type="EMBL" id="U68299">
    <property type="status" value="NOT_ANNOTATED_CDS"/>
    <property type="molecule type" value="Genomic_DNA"/>
</dbReference>
<dbReference type="Proteomes" id="UP000008774">
    <property type="component" value="Segment"/>
</dbReference>
<dbReference type="GO" id="GO:0044177">
    <property type="term" value="C:host cell Golgi apparatus"/>
    <property type="evidence" value="ECO:0007669"/>
    <property type="project" value="UniProtKB-SubCell"/>
</dbReference>
<dbReference type="GO" id="GO:0033644">
    <property type="term" value="C:host cell membrane"/>
    <property type="evidence" value="ECO:0007669"/>
    <property type="project" value="UniProtKB-SubCell"/>
</dbReference>
<dbReference type="GO" id="GO:0016020">
    <property type="term" value="C:membrane"/>
    <property type="evidence" value="ECO:0007669"/>
    <property type="project" value="UniProtKB-KW"/>
</dbReference>
<dbReference type="GO" id="GO:0019031">
    <property type="term" value="C:viral envelope"/>
    <property type="evidence" value="ECO:0007669"/>
    <property type="project" value="UniProtKB-KW"/>
</dbReference>
<dbReference type="GO" id="GO:0055036">
    <property type="term" value="C:virion membrane"/>
    <property type="evidence" value="ECO:0007669"/>
    <property type="project" value="UniProtKB-SubCell"/>
</dbReference>
<dbReference type="HAMAP" id="MF_04037">
    <property type="entry name" value="HSV_GN"/>
    <property type="match status" value="1"/>
</dbReference>
<dbReference type="InterPro" id="IPR005211">
    <property type="entry name" value="Herpes_glycoprotein_N_domain"/>
</dbReference>
<dbReference type="InterPro" id="IPR034707">
    <property type="entry name" value="HSV_GN"/>
</dbReference>
<dbReference type="Pfam" id="PF03554">
    <property type="entry name" value="Herpes_UL73"/>
    <property type="match status" value="1"/>
</dbReference>
<name>GN_MUHVS</name>
<keyword id="KW-1015">Disulfide bond</keyword>
<keyword id="KW-1040">Host Golgi apparatus</keyword>
<keyword id="KW-1043">Host membrane</keyword>
<keyword id="KW-0472">Membrane</keyword>
<keyword id="KW-1185">Reference proteome</keyword>
<keyword id="KW-0812">Transmembrane</keyword>
<keyword id="KW-1133">Transmembrane helix</keyword>
<keyword id="KW-0261">Viral envelope protein</keyword>
<keyword id="KW-0946">Virion</keyword>
<evidence type="ECO:0000255" key="1">
    <source>
        <dbReference type="HAMAP-Rule" id="MF_04037"/>
    </source>
</evidence>
<evidence type="ECO:0000305" key="2"/>
<protein>
    <recommendedName>
        <fullName evidence="1">Envelope glycoprotein N</fullName>
    </recommendedName>
</protein>
<comment type="function">
    <text evidence="1">Envelope glycoprotein necessary for proper maturation of gM and modulation of its membrane fusion activity. Also plays a critical role in virion morphogenesis.</text>
</comment>
<comment type="subunit">
    <text evidence="1">Interacts (via N-terminus) with gM (via N-terminus). The gM-gN heterodimer forms the gCII complex.</text>
</comment>
<comment type="subcellular location">
    <subcellularLocation>
        <location evidence="1">Virion membrane</location>
        <topology evidence="1">Single-pass type I membrane protein</topology>
    </subcellularLocation>
    <subcellularLocation>
        <location evidence="1">Host membrane</location>
        <topology evidence="1">Single-pass type I membrane protein</topology>
    </subcellularLocation>
    <subcellularLocation>
        <location evidence="1">Host Golgi apparatus</location>
        <location evidence="1">Host trans-Golgi network</location>
    </subcellularLocation>
    <text evidence="1">When coexpressed with gM, localizes in the host trans-Golgi network.</text>
</comment>
<comment type="similarity">
    <text evidence="1">Belongs to the herpesviridae glycoprotein N family.</text>
</comment>
<comment type="sequence caution" evidence="2">
    <conflict type="frameshift">
        <sequence resource="EMBL-CDS" id="AAA96662"/>
    </conflict>
</comment>
<gene>
    <name evidence="1" type="primary">gN</name>
    <name type="ORF">UL73</name>
</gene>
<reference key="1">
    <citation type="journal article" date="1995" name="Virus Genes">
        <title>Characterization of a conserved gene block in the murine cytomegalovirus genome.</title>
        <authorList>
            <person name="Messerle M."/>
            <person name="Rapp M."/>
            <person name="Lucin P."/>
            <person name="Koszinowski U.H."/>
        </authorList>
    </citation>
    <scope>NUCLEOTIDE SEQUENCE [GENOMIC DNA]</scope>
</reference>
<reference key="2">
    <citation type="journal article" date="1996" name="J. Virol.">
        <title>Analysis of the complete DNA sequence of murine cytomegalovirus.</title>
        <authorList>
            <person name="Rawlinson W.D."/>
            <person name="Farrell H.E."/>
            <person name="Barrell B.G."/>
        </authorList>
    </citation>
    <scope>NUCLEOTIDE SEQUENCE [LARGE SCALE GENOMIC DNA]</scope>
</reference>
<accession>Q69150</accession>
<sequence length="139" mass="14963">MACGKTESGDDSGRFGRTGAGMFGFIMPGFVGIFRLSFFLLLSFAMASGSSSPASVPVSVAASVPDTTVNKIVISDGSEAHNINEFYDVKCHSHFYGLSVSSFASIWMMVNAIVFICAFGVFMRHWCYKAFTSDTAKGY</sequence>
<feature type="chain" id="PRO_0000116221" description="Envelope glycoprotein N">
    <location>
        <begin position="1"/>
        <end position="139"/>
    </location>
</feature>
<feature type="topological domain" description="Virion surface" evidence="1">
    <location>
        <begin position="1"/>
        <end position="100"/>
    </location>
</feature>
<feature type="transmembrane region" description="Helical" evidence="1">
    <location>
        <begin position="101"/>
        <end position="121"/>
    </location>
</feature>
<feature type="topological domain" description="Intravirion" evidence="1">
    <location>
        <begin position="122"/>
        <end position="139"/>
    </location>
</feature>
<feature type="disulfide bond" description="Interchain (with gM)" evidence="1">
    <location>
        <position position="91"/>
    </location>
</feature>